<protein>
    <recommendedName>
        <fullName>NADH-ubiquinone oxidoreductase chain 4</fullName>
        <ecNumber>7.1.1.2</ecNumber>
    </recommendedName>
    <alternativeName>
        <fullName>NADH dehydrogenase subunit 4</fullName>
    </alternativeName>
</protein>
<feature type="chain" id="PRO_0000118002" description="NADH-ubiquinone oxidoreductase chain 4">
    <location>
        <begin position="1" status="less than"/>
        <end position="231" status="greater than"/>
    </location>
</feature>
<feature type="transmembrane region" description="Helical" evidence="2">
    <location>
        <begin position="1"/>
        <end position="21"/>
    </location>
</feature>
<feature type="transmembrane region" description="Helical" evidence="2">
    <location>
        <begin position="34"/>
        <end position="54"/>
    </location>
</feature>
<feature type="transmembrane region" description="Helical" evidence="2">
    <location>
        <begin position="61"/>
        <end position="80"/>
    </location>
</feature>
<feature type="transmembrane region" description="Helical" evidence="2">
    <location>
        <begin position="84"/>
        <end position="106"/>
    </location>
</feature>
<feature type="transmembrane region" description="Helical" evidence="2">
    <location>
        <begin position="128"/>
        <end position="148"/>
    </location>
</feature>
<feature type="transmembrane region" description="Helical" evidence="2">
    <location>
        <begin position="156"/>
        <end position="176"/>
    </location>
</feature>
<feature type="transmembrane region" description="Helical" evidence="2">
    <location>
        <begin position="211"/>
        <end position="231"/>
    </location>
</feature>
<feature type="non-terminal residue">
    <location>
        <position position="1"/>
    </location>
</feature>
<feature type="non-terminal residue">
    <location>
        <position position="231"/>
    </location>
</feature>
<comment type="function">
    <text evidence="1">Core subunit of the mitochondrial membrane respiratory chain NADH dehydrogenase (Complex I) that is believed to belong to the minimal assembly required for catalysis. Complex I functions in the transfer of electrons from NADH to the respiratory chain. The immediate electron acceptor for the enzyme is believed to be ubiquinone (By similarity).</text>
</comment>
<comment type="catalytic activity">
    <reaction>
        <text>a ubiquinone + NADH + 5 H(+)(in) = a ubiquinol + NAD(+) + 4 H(+)(out)</text>
        <dbReference type="Rhea" id="RHEA:29091"/>
        <dbReference type="Rhea" id="RHEA-COMP:9565"/>
        <dbReference type="Rhea" id="RHEA-COMP:9566"/>
        <dbReference type="ChEBI" id="CHEBI:15378"/>
        <dbReference type="ChEBI" id="CHEBI:16389"/>
        <dbReference type="ChEBI" id="CHEBI:17976"/>
        <dbReference type="ChEBI" id="CHEBI:57540"/>
        <dbReference type="ChEBI" id="CHEBI:57945"/>
        <dbReference type="EC" id="7.1.1.2"/>
    </reaction>
</comment>
<comment type="subcellular location">
    <subcellularLocation>
        <location evidence="1">Mitochondrion membrane</location>
        <topology evidence="1">Multi-pass membrane protein</topology>
    </subcellularLocation>
</comment>
<comment type="similarity">
    <text evidence="3">Belongs to the complex I subunit 4 family.</text>
</comment>
<dbReference type="EC" id="7.1.1.2"/>
<dbReference type="EMBL" id="U41896">
    <property type="protein sequence ID" value="AAB46656.1"/>
    <property type="molecule type" value="Genomic_DNA"/>
</dbReference>
<dbReference type="SMR" id="O03807"/>
<dbReference type="GO" id="GO:0031966">
    <property type="term" value="C:mitochondrial membrane"/>
    <property type="evidence" value="ECO:0007669"/>
    <property type="project" value="UniProtKB-SubCell"/>
</dbReference>
<dbReference type="GO" id="GO:0008137">
    <property type="term" value="F:NADH dehydrogenase (ubiquinone) activity"/>
    <property type="evidence" value="ECO:0007669"/>
    <property type="project" value="UniProtKB-EC"/>
</dbReference>
<dbReference type="GO" id="GO:0048039">
    <property type="term" value="F:ubiquinone binding"/>
    <property type="evidence" value="ECO:0007669"/>
    <property type="project" value="TreeGrafter"/>
</dbReference>
<dbReference type="GO" id="GO:0042773">
    <property type="term" value="P:ATP synthesis coupled electron transport"/>
    <property type="evidence" value="ECO:0007669"/>
    <property type="project" value="InterPro"/>
</dbReference>
<dbReference type="GO" id="GO:0015990">
    <property type="term" value="P:electron transport coupled proton transport"/>
    <property type="evidence" value="ECO:0007669"/>
    <property type="project" value="TreeGrafter"/>
</dbReference>
<dbReference type="InterPro" id="IPR003918">
    <property type="entry name" value="NADH_UbQ_OxRdtase"/>
</dbReference>
<dbReference type="InterPro" id="IPR001750">
    <property type="entry name" value="ND/Mrp_TM"/>
</dbReference>
<dbReference type="PANTHER" id="PTHR43507">
    <property type="entry name" value="NADH-UBIQUINONE OXIDOREDUCTASE CHAIN 4"/>
    <property type="match status" value="1"/>
</dbReference>
<dbReference type="PANTHER" id="PTHR43507:SF20">
    <property type="entry name" value="NADH-UBIQUINONE OXIDOREDUCTASE CHAIN 4"/>
    <property type="match status" value="1"/>
</dbReference>
<dbReference type="Pfam" id="PF00361">
    <property type="entry name" value="Proton_antipo_M"/>
    <property type="match status" value="1"/>
</dbReference>
<keyword id="KW-0249">Electron transport</keyword>
<keyword id="KW-0472">Membrane</keyword>
<keyword id="KW-0496">Mitochondrion</keyword>
<keyword id="KW-0520">NAD</keyword>
<keyword id="KW-0679">Respiratory chain</keyword>
<keyword id="KW-1278">Translocase</keyword>
<keyword id="KW-0812">Transmembrane</keyword>
<keyword id="KW-1133">Transmembrane helix</keyword>
<keyword id="KW-0813">Transport</keyword>
<keyword id="KW-0830">Ubiquinone</keyword>
<sequence length="231" mass="25393">PIAGSMVLAAILLKLGGYGIIRMMQILPTTKTDVFLPFIVLALWGAILANLTCLQQTDLKSLIAYSSVSHMGLVVAAIIIQTPWGLSGAMALMIAHGFTSSALFCLANTTYERTHTRVLILTRGFHNILPMATTWWLLINLMNIATPPTINFTSELLIISALFNWCPTTMIMLGLSMLITASYSLHMFLSTQMGPTMLSSQTEPTHSREHLLMILHIIPLVLISMKPELVI</sequence>
<reference key="1">
    <citation type="journal article" date="1996" name="Copeia">
        <title>Crotaline intergeneric relationships based on mitochondrial DNA sequence data.</title>
        <authorList>
            <person name="Kraus F."/>
            <person name="Mink D.G."/>
            <person name="Brown W.M."/>
        </authorList>
    </citation>
    <scope>NUCLEOTIDE SEQUENCE [GENOMIC DNA]</scope>
</reference>
<gene>
    <name type="primary">MT-ND4</name>
    <name type="synonym">MTND4</name>
    <name type="synonym">NADH4</name>
    <name type="synonym">ND4</name>
</gene>
<proteinExistence type="inferred from homology"/>
<evidence type="ECO:0000250" key="1"/>
<evidence type="ECO:0000255" key="2"/>
<evidence type="ECO:0000305" key="3"/>
<name>NU4M_TROWA</name>
<geneLocation type="mitochondrion"/>
<organism>
    <name type="scientific">Tropidolaemus wagleri</name>
    <name type="common">Wagler's pit viper</name>
    <name type="synonym">Trimeresurus wagleri</name>
    <dbReference type="NCBI Taxonomy" id="8770"/>
    <lineage>
        <taxon>Eukaryota</taxon>
        <taxon>Metazoa</taxon>
        <taxon>Chordata</taxon>
        <taxon>Craniata</taxon>
        <taxon>Vertebrata</taxon>
        <taxon>Euteleostomi</taxon>
        <taxon>Lepidosauria</taxon>
        <taxon>Squamata</taxon>
        <taxon>Bifurcata</taxon>
        <taxon>Unidentata</taxon>
        <taxon>Episquamata</taxon>
        <taxon>Toxicofera</taxon>
        <taxon>Serpentes</taxon>
        <taxon>Colubroidea</taxon>
        <taxon>Viperidae</taxon>
        <taxon>Crotalinae</taxon>
        <taxon>Tropidolaemus</taxon>
    </lineage>
</organism>
<accession>O03807</accession>